<organism>
    <name type="scientific">Danio rerio</name>
    <name type="common">Zebrafish</name>
    <name type="synonym">Brachydanio rerio</name>
    <dbReference type="NCBI Taxonomy" id="7955"/>
    <lineage>
        <taxon>Eukaryota</taxon>
        <taxon>Metazoa</taxon>
        <taxon>Chordata</taxon>
        <taxon>Craniata</taxon>
        <taxon>Vertebrata</taxon>
        <taxon>Euteleostomi</taxon>
        <taxon>Actinopterygii</taxon>
        <taxon>Neopterygii</taxon>
        <taxon>Teleostei</taxon>
        <taxon>Ostariophysi</taxon>
        <taxon>Cypriniformes</taxon>
        <taxon>Danionidae</taxon>
        <taxon>Danioninae</taxon>
        <taxon>Danio</taxon>
    </lineage>
</organism>
<reference key="1">
    <citation type="journal article" date="2013" name="Nature">
        <title>The zebrafish reference genome sequence and its relationship to the human genome.</title>
        <authorList>
            <person name="Howe K."/>
            <person name="Clark M.D."/>
            <person name="Torroja C.F."/>
            <person name="Torrance J."/>
            <person name="Berthelot C."/>
            <person name="Muffato M."/>
            <person name="Collins J.E."/>
            <person name="Humphray S."/>
            <person name="McLaren K."/>
            <person name="Matthews L."/>
            <person name="McLaren S."/>
            <person name="Sealy I."/>
            <person name="Caccamo M."/>
            <person name="Churcher C."/>
            <person name="Scott C."/>
            <person name="Barrett J.C."/>
            <person name="Koch R."/>
            <person name="Rauch G.J."/>
            <person name="White S."/>
            <person name="Chow W."/>
            <person name="Kilian B."/>
            <person name="Quintais L.T."/>
            <person name="Guerra-Assuncao J.A."/>
            <person name="Zhou Y."/>
            <person name="Gu Y."/>
            <person name="Yen J."/>
            <person name="Vogel J.H."/>
            <person name="Eyre T."/>
            <person name="Redmond S."/>
            <person name="Banerjee R."/>
            <person name="Chi J."/>
            <person name="Fu B."/>
            <person name="Langley E."/>
            <person name="Maguire S.F."/>
            <person name="Laird G.K."/>
            <person name="Lloyd D."/>
            <person name="Kenyon E."/>
            <person name="Donaldson S."/>
            <person name="Sehra H."/>
            <person name="Almeida-King J."/>
            <person name="Loveland J."/>
            <person name="Trevanion S."/>
            <person name="Jones M."/>
            <person name="Quail M."/>
            <person name="Willey D."/>
            <person name="Hunt A."/>
            <person name="Burton J."/>
            <person name="Sims S."/>
            <person name="McLay K."/>
            <person name="Plumb B."/>
            <person name="Davis J."/>
            <person name="Clee C."/>
            <person name="Oliver K."/>
            <person name="Clark R."/>
            <person name="Riddle C."/>
            <person name="Elliot D."/>
            <person name="Threadgold G."/>
            <person name="Harden G."/>
            <person name="Ware D."/>
            <person name="Begum S."/>
            <person name="Mortimore B."/>
            <person name="Kerry G."/>
            <person name="Heath P."/>
            <person name="Phillimore B."/>
            <person name="Tracey A."/>
            <person name="Corby N."/>
            <person name="Dunn M."/>
            <person name="Johnson C."/>
            <person name="Wood J."/>
            <person name="Clark S."/>
            <person name="Pelan S."/>
            <person name="Griffiths G."/>
            <person name="Smith M."/>
            <person name="Glithero R."/>
            <person name="Howden P."/>
            <person name="Barker N."/>
            <person name="Lloyd C."/>
            <person name="Stevens C."/>
            <person name="Harley J."/>
            <person name="Holt K."/>
            <person name="Panagiotidis G."/>
            <person name="Lovell J."/>
            <person name="Beasley H."/>
            <person name="Henderson C."/>
            <person name="Gordon D."/>
            <person name="Auger K."/>
            <person name="Wright D."/>
            <person name="Collins J."/>
            <person name="Raisen C."/>
            <person name="Dyer L."/>
            <person name="Leung K."/>
            <person name="Robertson L."/>
            <person name="Ambridge K."/>
            <person name="Leongamornlert D."/>
            <person name="McGuire S."/>
            <person name="Gilderthorp R."/>
            <person name="Griffiths C."/>
            <person name="Manthravadi D."/>
            <person name="Nichol S."/>
            <person name="Barker G."/>
            <person name="Whitehead S."/>
            <person name="Kay M."/>
            <person name="Brown J."/>
            <person name="Murnane C."/>
            <person name="Gray E."/>
            <person name="Humphries M."/>
            <person name="Sycamore N."/>
            <person name="Barker D."/>
            <person name="Saunders D."/>
            <person name="Wallis J."/>
            <person name="Babbage A."/>
            <person name="Hammond S."/>
            <person name="Mashreghi-Mohammadi M."/>
            <person name="Barr L."/>
            <person name="Martin S."/>
            <person name="Wray P."/>
            <person name="Ellington A."/>
            <person name="Matthews N."/>
            <person name="Ellwood M."/>
            <person name="Woodmansey R."/>
            <person name="Clark G."/>
            <person name="Cooper J."/>
            <person name="Tromans A."/>
            <person name="Grafham D."/>
            <person name="Skuce C."/>
            <person name="Pandian R."/>
            <person name="Andrews R."/>
            <person name="Harrison E."/>
            <person name="Kimberley A."/>
            <person name="Garnett J."/>
            <person name="Fosker N."/>
            <person name="Hall R."/>
            <person name="Garner P."/>
            <person name="Kelly D."/>
            <person name="Bird C."/>
            <person name="Palmer S."/>
            <person name="Gehring I."/>
            <person name="Berger A."/>
            <person name="Dooley C.M."/>
            <person name="Ersan-Urun Z."/>
            <person name="Eser C."/>
            <person name="Geiger H."/>
            <person name="Geisler M."/>
            <person name="Karotki L."/>
            <person name="Kirn A."/>
            <person name="Konantz J."/>
            <person name="Konantz M."/>
            <person name="Oberlander M."/>
            <person name="Rudolph-Geiger S."/>
            <person name="Teucke M."/>
            <person name="Lanz C."/>
            <person name="Raddatz G."/>
            <person name="Osoegawa K."/>
            <person name="Zhu B."/>
            <person name="Rapp A."/>
            <person name="Widaa S."/>
            <person name="Langford C."/>
            <person name="Yang F."/>
            <person name="Schuster S.C."/>
            <person name="Carter N.P."/>
            <person name="Harrow J."/>
            <person name="Ning Z."/>
            <person name="Herrero J."/>
            <person name="Searle S.M."/>
            <person name="Enright A."/>
            <person name="Geisler R."/>
            <person name="Plasterk R.H."/>
            <person name="Lee C."/>
            <person name="Westerfield M."/>
            <person name="de Jong P.J."/>
            <person name="Zon L.I."/>
            <person name="Postlethwait J.H."/>
            <person name="Nusslein-Volhard C."/>
            <person name="Hubbard T.J."/>
            <person name="Roest Crollius H."/>
            <person name="Rogers J."/>
            <person name="Stemple D.L."/>
        </authorList>
    </citation>
    <scope>NUCLEOTIDE SEQUENCE [LARGE SCALE GENOMIC DNA]</scope>
    <source>
        <strain>Tuebingen</strain>
    </source>
</reference>
<reference key="2">
    <citation type="journal article" date="2013" name="Dev. Biol.">
        <title>Maturin is a novel protein required for differentiation during primary neurogenesis.</title>
        <authorList>
            <person name="Martinez-De Luna R.I."/>
            <person name="Ku R.Y."/>
            <person name="Lyou Y."/>
            <person name="Zuber M.E."/>
        </authorList>
    </citation>
    <scope>DEVELOPMENTAL STAGE</scope>
</reference>
<accession>P0C8M4</accession>
<accession>B8JKY4</accession>
<name>MTURN_DANRE</name>
<comment type="function">
    <text evidence="1 2">May be involved in early neuronal development (By similarity). May play a role in promoting megakaryocyte differentiation (By similarity).</text>
</comment>
<comment type="subcellular location">
    <subcellularLocation>
        <location evidence="2">Cytoplasm</location>
    </subcellularLocation>
</comment>
<comment type="developmental stage">
    <text evidence="3">Expressed in embryo throughout the early nervous system. Strongly expressed in differentiating neurons in the brain, spinal cord and retina. Not detected in the lens at any developmental stage tested.</text>
</comment>
<comment type="similarity">
    <text evidence="4">Belongs to the MTURN family.</text>
</comment>
<keyword id="KW-0963">Cytoplasm</keyword>
<keyword id="KW-0217">Developmental protein</keyword>
<keyword id="KW-1185">Reference proteome</keyword>
<feature type="chain" id="PRO_0000359897" description="Maturin">
    <location>
        <begin position="1"/>
        <end position="133"/>
    </location>
</feature>
<evidence type="ECO:0000250" key="1">
    <source>
        <dbReference type="UniProtKB" id="Q7ZX36"/>
    </source>
</evidence>
<evidence type="ECO:0000250" key="2">
    <source>
        <dbReference type="UniProtKB" id="Q8N3F0"/>
    </source>
</evidence>
<evidence type="ECO:0000269" key="3">
    <source>
    </source>
</evidence>
<evidence type="ECO:0000305" key="4"/>
<protein>
    <recommendedName>
        <fullName>Maturin</fullName>
    </recommendedName>
    <alternativeName>
        <fullName>Maturin neural progenitor differentiation regulator protein homolog</fullName>
    </alternativeName>
</protein>
<dbReference type="EMBL" id="CU424444">
    <property type="protein sequence ID" value="CAX13999.1"/>
    <property type="molecule type" value="Genomic_DNA"/>
</dbReference>
<dbReference type="RefSeq" id="NP_001138278.1">
    <property type="nucleotide sequence ID" value="NM_001144806.1"/>
</dbReference>
<dbReference type="FunCoup" id="P0C8M4">
    <property type="interactions" value="790"/>
</dbReference>
<dbReference type="STRING" id="7955.ENSDARP00000098753"/>
<dbReference type="PaxDb" id="7955-ENSDARP00000098753"/>
<dbReference type="Ensembl" id="ENSDART00000108784">
    <property type="protein sequence ID" value="ENSDARP00000098753"/>
    <property type="gene ID" value="ENSDARG00000074505"/>
</dbReference>
<dbReference type="GeneID" id="792465"/>
<dbReference type="KEGG" id="dre:792465"/>
<dbReference type="AGR" id="ZFIN:ZDB-GENE-081104-127"/>
<dbReference type="CTD" id="222166"/>
<dbReference type="ZFIN" id="ZDB-GENE-081104-127">
    <property type="gene designation" value="mturn"/>
</dbReference>
<dbReference type="eggNOG" id="ENOG502RXQA">
    <property type="taxonomic scope" value="Eukaryota"/>
</dbReference>
<dbReference type="HOGENOM" id="CLU_163056_0_0_1"/>
<dbReference type="InParanoid" id="P0C8M4"/>
<dbReference type="OMA" id="YEQYHAD"/>
<dbReference type="OrthoDB" id="9922400at2759"/>
<dbReference type="PhylomeDB" id="P0C8M4"/>
<dbReference type="TreeFam" id="TF332814"/>
<dbReference type="PRO" id="PR:P0C8M4"/>
<dbReference type="Proteomes" id="UP000000437">
    <property type="component" value="Chromosome 19"/>
</dbReference>
<dbReference type="Bgee" id="ENSDARG00000074505">
    <property type="expression patterns" value="Expressed in retina and 5 other cell types or tissues"/>
</dbReference>
<dbReference type="GO" id="GO:0005737">
    <property type="term" value="C:cytoplasm"/>
    <property type="evidence" value="ECO:0000250"/>
    <property type="project" value="UniProtKB"/>
</dbReference>
<dbReference type="GO" id="GO:0045654">
    <property type="term" value="P:positive regulation of megakaryocyte differentiation"/>
    <property type="evidence" value="ECO:0000250"/>
    <property type="project" value="UniProtKB"/>
</dbReference>
<dbReference type="GO" id="GO:0023051">
    <property type="term" value="P:regulation of signaling"/>
    <property type="evidence" value="ECO:0000318"/>
    <property type="project" value="GO_Central"/>
</dbReference>
<dbReference type="InterPro" id="IPR027892">
    <property type="entry name" value="Maturin"/>
</dbReference>
<dbReference type="PANTHER" id="PTHR32008">
    <property type="entry name" value="MATURIN"/>
    <property type="match status" value="1"/>
</dbReference>
<dbReference type="PANTHER" id="PTHR32008:SF2">
    <property type="entry name" value="MATURIN"/>
    <property type="match status" value="1"/>
</dbReference>
<dbReference type="Pfam" id="PF15167">
    <property type="entry name" value="DUF4581"/>
    <property type="match status" value="1"/>
</dbReference>
<sequence length="133" mass="15289">MEFKELVDAAEKWCTGNPFDLIFAEDVDERRLDFYAEPGISFYVLCPDNLTGGTDNFHVWSESEDCLPFLQLAQDYISSCGKKTLLEVLDKVFRSFRPLLGLPDIDDDTFDQYHADVEEEPEPDHQQMGVSQQ</sequence>
<gene>
    <name type="primary">mturn</name>
    <name type="ORF">ch211-149a19.1</name>
</gene>
<proteinExistence type="evidence at transcript level"/>